<sequence length="122" mass="13493">MIQMQTNLDVADNSGARRVQCIKVLGGSHRRYASVGDIIVVSVKEAIPRGRVKKGDVRKAVVVRTAKEVRREDGTTIRFDRNAAVILNNQGEPVGTRIFGPVVRELRAKNFMKIISLAPEVL</sequence>
<organism>
    <name type="scientific">Cereibacter sphaeroides (strain ATCC 17023 / DSM 158 / JCM 6121 / CCUG 31486 / LMG 2827 / NBRC 12203 / NCIMB 8253 / ATH 2.4.1.)</name>
    <name type="common">Rhodobacter sphaeroides</name>
    <dbReference type="NCBI Taxonomy" id="272943"/>
    <lineage>
        <taxon>Bacteria</taxon>
        <taxon>Pseudomonadati</taxon>
        <taxon>Pseudomonadota</taxon>
        <taxon>Alphaproteobacteria</taxon>
        <taxon>Rhodobacterales</taxon>
        <taxon>Paracoccaceae</taxon>
        <taxon>Cereibacter</taxon>
    </lineage>
</organism>
<gene>
    <name evidence="1" type="primary">rplN</name>
    <name type="ordered locus">RHOS4_03040</name>
    <name type="ORF">RSP_1725</name>
</gene>
<accession>Q3J5R2</accession>
<name>RL14_CERS4</name>
<dbReference type="EMBL" id="CP000143">
    <property type="protein sequence ID" value="ABA77872.1"/>
    <property type="molecule type" value="Genomic_DNA"/>
</dbReference>
<dbReference type="RefSeq" id="WP_002722508.1">
    <property type="nucleotide sequence ID" value="NZ_CP030271.1"/>
</dbReference>
<dbReference type="RefSeq" id="YP_351773.1">
    <property type="nucleotide sequence ID" value="NC_007493.2"/>
</dbReference>
<dbReference type="SMR" id="Q3J5R2"/>
<dbReference type="STRING" id="272943.RSP_1725"/>
<dbReference type="EnsemblBacteria" id="ABA77872">
    <property type="protein sequence ID" value="ABA77872"/>
    <property type="gene ID" value="RSP_1725"/>
</dbReference>
<dbReference type="GeneID" id="67445510"/>
<dbReference type="KEGG" id="rsp:RSP_1725"/>
<dbReference type="PATRIC" id="fig|272943.9.peg.603"/>
<dbReference type="eggNOG" id="COG0093">
    <property type="taxonomic scope" value="Bacteria"/>
</dbReference>
<dbReference type="OrthoDB" id="9806379at2"/>
<dbReference type="PhylomeDB" id="Q3J5R2"/>
<dbReference type="Proteomes" id="UP000002703">
    <property type="component" value="Chromosome 1"/>
</dbReference>
<dbReference type="GO" id="GO:0022625">
    <property type="term" value="C:cytosolic large ribosomal subunit"/>
    <property type="evidence" value="ECO:0007669"/>
    <property type="project" value="TreeGrafter"/>
</dbReference>
<dbReference type="GO" id="GO:0070180">
    <property type="term" value="F:large ribosomal subunit rRNA binding"/>
    <property type="evidence" value="ECO:0007669"/>
    <property type="project" value="TreeGrafter"/>
</dbReference>
<dbReference type="GO" id="GO:0003735">
    <property type="term" value="F:structural constituent of ribosome"/>
    <property type="evidence" value="ECO:0007669"/>
    <property type="project" value="InterPro"/>
</dbReference>
<dbReference type="GO" id="GO:0006412">
    <property type="term" value="P:translation"/>
    <property type="evidence" value="ECO:0007669"/>
    <property type="project" value="UniProtKB-UniRule"/>
</dbReference>
<dbReference type="CDD" id="cd00337">
    <property type="entry name" value="Ribosomal_uL14"/>
    <property type="match status" value="1"/>
</dbReference>
<dbReference type="FunFam" id="2.40.150.20:FF:000001">
    <property type="entry name" value="50S ribosomal protein L14"/>
    <property type="match status" value="1"/>
</dbReference>
<dbReference type="Gene3D" id="2.40.150.20">
    <property type="entry name" value="Ribosomal protein L14"/>
    <property type="match status" value="1"/>
</dbReference>
<dbReference type="HAMAP" id="MF_01367">
    <property type="entry name" value="Ribosomal_uL14"/>
    <property type="match status" value="1"/>
</dbReference>
<dbReference type="InterPro" id="IPR000218">
    <property type="entry name" value="Ribosomal_uL14"/>
</dbReference>
<dbReference type="InterPro" id="IPR005745">
    <property type="entry name" value="Ribosomal_uL14_bac-type"/>
</dbReference>
<dbReference type="InterPro" id="IPR019972">
    <property type="entry name" value="Ribosomal_uL14_CS"/>
</dbReference>
<dbReference type="InterPro" id="IPR036853">
    <property type="entry name" value="Ribosomal_uL14_sf"/>
</dbReference>
<dbReference type="NCBIfam" id="TIGR01067">
    <property type="entry name" value="rplN_bact"/>
    <property type="match status" value="1"/>
</dbReference>
<dbReference type="PANTHER" id="PTHR11761">
    <property type="entry name" value="50S/60S RIBOSOMAL PROTEIN L14/L23"/>
    <property type="match status" value="1"/>
</dbReference>
<dbReference type="PANTHER" id="PTHR11761:SF3">
    <property type="entry name" value="LARGE RIBOSOMAL SUBUNIT PROTEIN UL14M"/>
    <property type="match status" value="1"/>
</dbReference>
<dbReference type="Pfam" id="PF00238">
    <property type="entry name" value="Ribosomal_L14"/>
    <property type="match status" value="1"/>
</dbReference>
<dbReference type="SMART" id="SM01374">
    <property type="entry name" value="Ribosomal_L14"/>
    <property type="match status" value="1"/>
</dbReference>
<dbReference type="SUPFAM" id="SSF50193">
    <property type="entry name" value="Ribosomal protein L14"/>
    <property type="match status" value="1"/>
</dbReference>
<dbReference type="PROSITE" id="PS00049">
    <property type="entry name" value="RIBOSOMAL_L14"/>
    <property type="match status" value="1"/>
</dbReference>
<evidence type="ECO:0000255" key="1">
    <source>
        <dbReference type="HAMAP-Rule" id="MF_01367"/>
    </source>
</evidence>
<evidence type="ECO:0000305" key="2"/>
<feature type="chain" id="PRO_0000266541" description="Large ribosomal subunit protein uL14">
    <location>
        <begin position="1"/>
        <end position="122"/>
    </location>
</feature>
<keyword id="KW-1185">Reference proteome</keyword>
<keyword id="KW-0687">Ribonucleoprotein</keyword>
<keyword id="KW-0689">Ribosomal protein</keyword>
<keyword id="KW-0694">RNA-binding</keyword>
<keyword id="KW-0699">rRNA-binding</keyword>
<comment type="function">
    <text evidence="1">Binds to 23S rRNA. Forms part of two intersubunit bridges in the 70S ribosome.</text>
</comment>
<comment type="subunit">
    <text evidence="1">Part of the 50S ribosomal subunit. Forms a cluster with proteins L3 and L19. In the 70S ribosome, L14 and L19 interact and together make contacts with the 16S rRNA in bridges B5 and B8.</text>
</comment>
<comment type="similarity">
    <text evidence="1">Belongs to the universal ribosomal protein uL14 family.</text>
</comment>
<reference key="1">
    <citation type="submission" date="2005-09" db="EMBL/GenBank/DDBJ databases">
        <title>Complete sequence of chromosome 1 of Rhodobacter sphaeroides 2.4.1.</title>
        <authorList>
            <person name="Copeland A."/>
            <person name="Lucas S."/>
            <person name="Lapidus A."/>
            <person name="Barry K."/>
            <person name="Detter J.C."/>
            <person name="Glavina T."/>
            <person name="Hammon N."/>
            <person name="Israni S."/>
            <person name="Pitluck S."/>
            <person name="Richardson P."/>
            <person name="Mackenzie C."/>
            <person name="Choudhary M."/>
            <person name="Larimer F."/>
            <person name="Hauser L.J."/>
            <person name="Land M."/>
            <person name="Donohue T.J."/>
            <person name="Kaplan S."/>
        </authorList>
    </citation>
    <scope>NUCLEOTIDE SEQUENCE [LARGE SCALE GENOMIC DNA]</scope>
    <source>
        <strain>ATCC 17023 / DSM 158 / JCM 6121 / CCUG 31486 / LMG 2827 / NBRC 12203 / NCIMB 8253 / ATH 2.4.1.</strain>
    </source>
</reference>
<proteinExistence type="inferred from homology"/>
<protein>
    <recommendedName>
        <fullName evidence="1">Large ribosomal subunit protein uL14</fullName>
    </recommendedName>
    <alternativeName>
        <fullName evidence="2">50S ribosomal protein L14</fullName>
    </alternativeName>
</protein>